<protein>
    <recommendedName>
        <fullName evidence="6">Probable esterase afoC</fullName>
        <ecNumber evidence="5">3.1.2.-</ecNumber>
    </recommendedName>
    <alternativeName>
        <fullName evidence="5">Asperfuranone biosynthesis protein B</fullName>
    </alternativeName>
</protein>
<sequence>MPALDIASAPAAVYQQQLHLPRILCLHGGGTNARIFTAQCRALRRQLTDSYRLVFADAPFLSSAGPDVTSVYGEWGPFRSWVPVPAGVDISAWAAAGAASRIDIDVEAIDECIAAAIAQDDRAGATGDWVGLLGFSQGARVAASLLYRQQKQQRMGLTSWSRGRDRKRGATSSTNYRFAVLFAGRGPLLDLGFGSGSLAGSSAASSSASASVSGSESAGEEEEDGHLLSIPTIHVHGLRDPGLEMHRDLVRSCRPSSVRIVEWEGAHRMPITTKDVGAVVAELRHLAISRKYESLRC</sequence>
<feature type="chain" id="PRO_0000436371" description="Probable esterase afoC">
    <location>
        <begin position="1"/>
        <end position="297"/>
    </location>
</feature>
<feature type="region of interest" description="Disordered" evidence="2">
    <location>
        <begin position="204"/>
        <end position="226"/>
    </location>
</feature>
<feature type="compositionally biased region" description="Low complexity" evidence="2">
    <location>
        <begin position="204"/>
        <end position="217"/>
    </location>
</feature>
<feature type="active site" description="Charge relay system" evidence="1">
    <location>
        <position position="136"/>
    </location>
</feature>
<feature type="active site" description="Charge relay system" evidence="1">
    <location>
        <position position="240"/>
    </location>
</feature>
<feature type="active site" description="Charge relay system" evidence="1">
    <location>
        <position position="267"/>
    </location>
</feature>
<organism>
    <name type="scientific">Emericella nidulans (strain FGSC A4 / ATCC 38163 / CBS 112.46 / NRRL 194 / M139)</name>
    <name type="common">Aspergillus nidulans</name>
    <dbReference type="NCBI Taxonomy" id="227321"/>
    <lineage>
        <taxon>Eukaryota</taxon>
        <taxon>Fungi</taxon>
        <taxon>Dikarya</taxon>
        <taxon>Ascomycota</taxon>
        <taxon>Pezizomycotina</taxon>
        <taxon>Eurotiomycetes</taxon>
        <taxon>Eurotiomycetidae</taxon>
        <taxon>Eurotiales</taxon>
        <taxon>Aspergillaceae</taxon>
        <taxon>Aspergillus</taxon>
        <taxon>Aspergillus subgen. Nidulantes</taxon>
    </lineage>
</organism>
<reference key="1">
    <citation type="journal article" date="2005" name="Nature">
        <title>Sequencing of Aspergillus nidulans and comparative analysis with A. fumigatus and A. oryzae.</title>
        <authorList>
            <person name="Galagan J.E."/>
            <person name="Calvo S.E."/>
            <person name="Cuomo C."/>
            <person name="Ma L.-J."/>
            <person name="Wortman J.R."/>
            <person name="Batzoglou S."/>
            <person name="Lee S.-I."/>
            <person name="Bastuerkmen M."/>
            <person name="Spevak C.C."/>
            <person name="Clutterbuck J."/>
            <person name="Kapitonov V."/>
            <person name="Jurka J."/>
            <person name="Scazzocchio C."/>
            <person name="Farman M.L."/>
            <person name="Butler J."/>
            <person name="Purcell S."/>
            <person name="Harris S."/>
            <person name="Braus G.H."/>
            <person name="Draht O."/>
            <person name="Busch S."/>
            <person name="D'Enfert C."/>
            <person name="Bouchier C."/>
            <person name="Goldman G.H."/>
            <person name="Bell-Pedersen D."/>
            <person name="Griffiths-Jones S."/>
            <person name="Doonan J.H."/>
            <person name="Yu J."/>
            <person name="Vienken K."/>
            <person name="Pain A."/>
            <person name="Freitag M."/>
            <person name="Selker E.U."/>
            <person name="Archer D.B."/>
            <person name="Penalva M.A."/>
            <person name="Oakley B.R."/>
            <person name="Momany M."/>
            <person name="Tanaka T."/>
            <person name="Kumagai T."/>
            <person name="Asai K."/>
            <person name="Machida M."/>
            <person name="Nierman W.C."/>
            <person name="Denning D.W."/>
            <person name="Caddick M.X."/>
            <person name="Hynes M."/>
            <person name="Paoletti M."/>
            <person name="Fischer R."/>
            <person name="Miller B.L."/>
            <person name="Dyer P.S."/>
            <person name="Sachs M.S."/>
            <person name="Osmani S.A."/>
            <person name="Birren B.W."/>
        </authorList>
    </citation>
    <scope>NUCLEOTIDE SEQUENCE [LARGE SCALE GENOMIC DNA]</scope>
    <source>
        <strain>FGSC A4 / ATCC 38163 / CBS 112.46 / NRRL 194 / M139</strain>
    </source>
</reference>
<reference key="2">
    <citation type="journal article" date="2009" name="Fungal Genet. Biol.">
        <title>The 2008 update of the Aspergillus nidulans genome annotation: a community effort.</title>
        <authorList>
            <person name="Wortman J.R."/>
            <person name="Gilsenan J.M."/>
            <person name="Joardar V."/>
            <person name="Deegan J."/>
            <person name="Clutterbuck J."/>
            <person name="Andersen M.R."/>
            <person name="Archer D."/>
            <person name="Bencina M."/>
            <person name="Braus G."/>
            <person name="Coutinho P."/>
            <person name="von Dohren H."/>
            <person name="Doonan J."/>
            <person name="Driessen A.J."/>
            <person name="Durek P."/>
            <person name="Espeso E."/>
            <person name="Fekete E."/>
            <person name="Flipphi M."/>
            <person name="Estrada C.G."/>
            <person name="Geysens S."/>
            <person name="Goldman G."/>
            <person name="de Groot P.W."/>
            <person name="Hansen K."/>
            <person name="Harris S.D."/>
            <person name="Heinekamp T."/>
            <person name="Helmstaedt K."/>
            <person name="Henrissat B."/>
            <person name="Hofmann G."/>
            <person name="Homan T."/>
            <person name="Horio T."/>
            <person name="Horiuchi H."/>
            <person name="James S."/>
            <person name="Jones M."/>
            <person name="Karaffa L."/>
            <person name="Karanyi Z."/>
            <person name="Kato M."/>
            <person name="Keller N."/>
            <person name="Kelly D.E."/>
            <person name="Kiel J.A."/>
            <person name="Kim J.M."/>
            <person name="van der Klei I.J."/>
            <person name="Klis F.M."/>
            <person name="Kovalchuk A."/>
            <person name="Krasevec N."/>
            <person name="Kubicek C.P."/>
            <person name="Liu B."/>
            <person name="Maccabe A."/>
            <person name="Meyer V."/>
            <person name="Mirabito P."/>
            <person name="Miskei M."/>
            <person name="Mos M."/>
            <person name="Mullins J."/>
            <person name="Nelson D.R."/>
            <person name="Nielsen J."/>
            <person name="Oakley B.R."/>
            <person name="Osmani S.A."/>
            <person name="Pakula T."/>
            <person name="Paszewski A."/>
            <person name="Paulsen I."/>
            <person name="Pilsyk S."/>
            <person name="Pocsi I."/>
            <person name="Punt P.J."/>
            <person name="Ram A.F."/>
            <person name="Ren Q."/>
            <person name="Robellet X."/>
            <person name="Robson G."/>
            <person name="Seiboth B."/>
            <person name="van Solingen P."/>
            <person name="Specht T."/>
            <person name="Sun J."/>
            <person name="Taheri-Talesh N."/>
            <person name="Takeshita N."/>
            <person name="Ussery D."/>
            <person name="vanKuyk P.A."/>
            <person name="Visser H."/>
            <person name="van de Vondervoort P.J."/>
            <person name="de Vries R.P."/>
            <person name="Walton J."/>
            <person name="Xiang X."/>
            <person name="Xiong Y."/>
            <person name="Zeng A.P."/>
            <person name="Brandt B.W."/>
            <person name="Cornell M.J."/>
            <person name="van den Hondel C.A."/>
            <person name="Visser J."/>
            <person name="Oliver S.G."/>
            <person name="Turner G."/>
        </authorList>
    </citation>
    <scope>GENOME REANNOTATION</scope>
    <source>
        <strain>FGSC A4 / ATCC 38163 / CBS 112.46 / NRRL 194 / M139</strain>
    </source>
</reference>
<reference key="3">
    <citation type="journal article" date="2009" name="J. Am. Chem. Soc.">
        <title>A gene cluster containing two fungal polyketide synthases encodes the biosynthetic pathway for a polyketide, asperfuranone, in Aspergillus nidulans.</title>
        <authorList>
            <person name="Chiang Y.M."/>
            <person name="Szewczyk E."/>
            <person name="Davidson A.D."/>
            <person name="Keller N."/>
            <person name="Oakley B.R."/>
            <person name="Wang C.C."/>
        </authorList>
    </citation>
    <scope>FUNCTION</scope>
    <scope>DISRUPTION PHENOTYPE</scope>
</reference>
<reference key="4">
    <citation type="journal article" date="2010" name="Basic Clin. Pharmacol. Toxicol.">
        <title>Asperfuranone from Aspergillus nidulans inhibits proliferation of human non-small cell lung cancer A549 cells via blocking cell cycle progression and inducing apoptosis.</title>
        <authorList>
            <person name="Wang C.C."/>
            <person name="Chiang Y.M."/>
            <person name="Praseuth M.B."/>
            <person name="Kuo P.L."/>
            <person name="Liang H.L."/>
            <person name="Hsu Y.L."/>
        </authorList>
    </citation>
    <scope>BIOTECHNOLOGY</scope>
</reference>
<proteinExistence type="evidence at protein level"/>
<gene>
    <name evidence="5" type="primary">afoC</name>
    <name type="ORF">AN1032</name>
</gene>
<name>AFOC_EMENI</name>
<dbReference type="EC" id="3.1.2.-" evidence="5"/>
<dbReference type="EMBL" id="BN001308">
    <property type="protein sequence ID" value="CBF88298.1"/>
    <property type="molecule type" value="Genomic_DNA"/>
</dbReference>
<dbReference type="EMBL" id="AACD01000015">
    <property type="protein sequence ID" value="EAA65600.1"/>
    <property type="molecule type" value="Genomic_DNA"/>
</dbReference>
<dbReference type="RefSeq" id="XP_658636.1">
    <property type="nucleotide sequence ID" value="XM_653544.1"/>
</dbReference>
<dbReference type="SMR" id="Q5BEJ8"/>
<dbReference type="STRING" id="227321.Q5BEJ8"/>
<dbReference type="ESTHER" id="emeni-afoc">
    <property type="family name" value="FSH1"/>
</dbReference>
<dbReference type="EnsemblFungi" id="CBF88298">
    <property type="protein sequence ID" value="CBF88298"/>
    <property type="gene ID" value="ANIA_01032"/>
</dbReference>
<dbReference type="KEGG" id="ani:ANIA_01032"/>
<dbReference type="VEuPathDB" id="FungiDB:AN1032"/>
<dbReference type="eggNOG" id="KOG2551">
    <property type="taxonomic scope" value="Eukaryota"/>
</dbReference>
<dbReference type="HOGENOM" id="CLU_051938_0_0_1"/>
<dbReference type="InParanoid" id="Q5BEJ8"/>
<dbReference type="OMA" id="DAPFFCD"/>
<dbReference type="OrthoDB" id="414698at2759"/>
<dbReference type="Proteomes" id="UP000000560">
    <property type="component" value="Chromosome VIII"/>
</dbReference>
<dbReference type="GO" id="GO:0005737">
    <property type="term" value="C:cytoplasm"/>
    <property type="evidence" value="ECO:0000318"/>
    <property type="project" value="GO_Central"/>
</dbReference>
<dbReference type="GO" id="GO:0005634">
    <property type="term" value="C:nucleus"/>
    <property type="evidence" value="ECO:0000318"/>
    <property type="project" value="GO_Central"/>
</dbReference>
<dbReference type="GO" id="GO:0016787">
    <property type="term" value="F:hydrolase activity"/>
    <property type="evidence" value="ECO:0000318"/>
    <property type="project" value="GO_Central"/>
</dbReference>
<dbReference type="GO" id="GO:1900554">
    <property type="term" value="P:asperfuranone biosynthetic process"/>
    <property type="evidence" value="ECO:0000315"/>
    <property type="project" value="AspGD"/>
</dbReference>
<dbReference type="GO" id="GO:0044550">
    <property type="term" value="P:secondary metabolite biosynthetic process"/>
    <property type="evidence" value="ECO:0000318"/>
    <property type="project" value="GO_Central"/>
</dbReference>
<dbReference type="FunFam" id="3.40.50.1820:FF:000296">
    <property type="entry name" value="Probable esterase afoC"/>
    <property type="match status" value="1"/>
</dbReference>
<dbReference type="Gene3D" id="3.40.50.1820">
    <property type="entry name" value="alpha/beta hydrolase"/>
    <property type="match status" value="1"/>
</dbReference>
<dbReference type="InterPro" id="IPR029058">
    <property type="entry name" value="AB_hydrolase_fold"/>
</dbReference>
<dbReference type="InterPro" id="IPR005645">
    <property type="entry name" value="FSH-like_dom"/>
</dbReference>
<dbReference type="InterPro" id="IPR050593">
    <property type="entry name" value="LovG"/>
</dbReference>
<dbReference type="PANTHER" id="PTHR48070:SF3">
    <property type="entry name" value="ESTERASE DBAE-RELATED"/>
    <property type="match status" value="1"/>
</dbReference>
<dbReference type="PANTHER" id="PTHR48070">
    <property type="entry name" value="ESTERASE OVCA2"/>
    <property type="match status" value="1"/>
</dbReference>
<dbReference type="Pfam" id="PF03959">
    <property type="entry name" value="FSH1"/>
    <property type="match status" value="1"/>
</dbReference>
<dbReference type="SUPFAM" id="SSF53474">
    <property type="entry name" value="alpha/beta-Hydrolases"/>
    <property type="match status" value="1"/>
</dbReference>
<evidence type="ECO:0000250" key="1">
    <source>
        <dbReference type="UniProtKB" id="P38777"/>
    </source>
</evidence>
<evidence type="ECO:0000256" key="2">
    <source>
        <dbReference type="SAM" id="MobiDB-lite"/>
    </source>
</evidence>
<evidence type="ECO:0000269" key="3">
    <source>
    </source>
</evidence>
<evidence type="ECO:0000269" key="4">
    <source>
    </source>
</evidence>
<evidence type="ECO:0000303" key="5">
    <source>
    </source>
</evidence>
<evidence type="ECO:0000305" key="6"/>
<comment type="function">
    <text evidence="3">Probable esterase; part of the gene cluster that mediates the biosynthesis of asperfuranone, a probable antitumor agent (PubMed:19199437). The polyketide synthase afoG is responsible for producing the 3,5-dimethyloctadienone moiety from acetyl-CoA, three malonyl-CoA, and two S-adenosyl methionines (SAM) (PubMed:19199437). The 3,5-dimethyloctadienone moiety is then loaded onto the SAT domain of afoE and extended with four malonyl-CoA and one SAM, which leads to the formation of 2,4-dihydroxy-6-(5,7-dimethyl-2-oxo-trans-3-trans-5-nonadienyl)-3-methylbenzaldehyde (compound 2) after reductive release and aldol condensation (PubMed:19199437). AfoD is the next enzyme in the biosynthesis sequence and hydroxylates the side chain at the benzylic position of compound 2 (PubMed:19199437). After benzylic hydroxylation, a furan ring is formed after five-member ring hemiacetal formation and water elimination (PubMed:19199437). AfoF and afoC are proposed to oxidize the R-diketone proton and to reduce the unconjugated carbonyl group, respectively, to generate asperfuranone (PubMed:19199437). Since no intermediates could be isolated from afoF and afoC deletants, the sequence of these two enzymes is not fully understood (PubMed:19199437). Moreover, since afoC deletant still produces a small amount of asperfuranone, other endogenous oxidoreductases might catalyze the same reaction with much less efficiency (PubMed:19199437).</text>
</comment>
<comment type="induction">
    <text evidence="3">Expression is regulated by the asperfuranone cluster transcription factor afoA (PubMed:19199437).</text>
</comment>
<comment type="disruption phenotype">
    <text evidence="3">Strongly diminishes production of asperfuranone (PubMed:19199437).</text>
</comment>
<comment type="biotechnology">
    <text evidence="4">Asperfuranone provides anti-proliferative activity in human non-small cell lung cancer cells (PubMed:20148857).</text>
</comment>
<comment type="similarity">
    <text evidence="6">Belongs to the LovG family.</text>
</comment>
<accession>Q5BEJ8</accession>
<accession>C8VTY1</accession>
<keyword id="KW-0378">Hydrolase</keyword>
<keyword id="KW-1185">Reference proteome</keyword>